<evidence type="ECO:0000255" key="1">
    <source>
        <dbReference type="HAMAP-Rule" id="MF_00539"/>
    </source>
</evidence>
<evidence type="ECO:0000256" key="2">
    <source>
        <dbReference type="SAM" id="MobiDB-lite"/>
    </source>
</evidence>
<evidence type="ECO:0000305" key="3"/>
<protein>
    <recommendedName>
        <fullName evidence="1">Large ribosomal subunit protein bL27</fullName>
    </recommendedName>
    <alternativeName>
        <fullName evidence="3">50S ribosomal protein L27</fullName>
    </alternativeName>
</protein>
<keyword id="KW-0687">Ribonucleoprotein</keyword>
<keyword id="KW-0689">Ribosomal protein</keyword>
<dbReference type="EMBL" id="CP000472">
    <property type="protein sequence ID" value="ACJ30760.1"/>
    <property type="molecule type" value="Genomic_DNA"/>
</dbReference>
<dbReference type="RefSeq" id="WP_012154114.1">
    <property type="nucleotide sequence ID" value="NC_011566.1"/>
</dbReference>
<dbReference type="SMR" id="B8CSY4"/>
<dbReference type="STRING" id="225849.swp_4096"/>
<dbReference type="KEGG" id="swp:swp_4096"/>
<dbReference type="eggNOG" id="COG0211">
    <property type="taxonomic scope" value="Bacteria"/>
</dbReference>
<dbReference type="HOGENOM" id="CLU_095424_4_1_6"/>
<dbReference type="OrthoDB" id="9803474at2"/>
<dbReference type="Proteomes" id="UP000000753">
    <property type="component" value="Chromosome"/>
</dbReference>
<dbReference type="GO" id="GO:0022625">
    <property type="term" value="C:cytosolic large ribosomal subunit"/>
    <property type="evidence" value="ECO:0007669"/>
    <property type="project" value="TreeGrafter"/>
</dbReference>
<dbReference type="GO" id="GO:0003735">
    <property type="term" value="F:structural constituent of ribosome"/>
    <property type="evidence" value="ECO:0007669"/>
    <property type="project" value="InterPro"/>
</dbReference>
<dbReference type="GO" id="GO:0006412">
    <property type="term" value="P:translation"/>
    <property type="evidence" value="ECO:0007669"/>
    <property type="project" value="UniProtKB-UniRule"/>
</dbReference>
<dbReference type="FunFam" id="2.40.50.100:FF:000001">
    <property type="entry name" value="50S ribosomal protein L27"/>
    <property type="match status" value="1"/>
</dbReference>
<dbReference type="Gene3D" id="2.40.50.100">
    <property type="match status" value="1"/>
</dbReference>
<dbReference type="HAMAP" id="MF_00539">
    <property type="entry name" value="Ribosomal_bL27"/>
    <property type="match status" value="1"/>
</dbReference>
<dbReference type="InterPro" id="IPR001684">
    <property type="entry name" value="Ribosomal_bL27"/>
</dbReference>
<dbReference type="InterPro" id="IPR018261">
    <property type="entry name" value="Ribosomal_bL27_CS"/>
</dbReference>
<dbReference type="NCBIfam" id="TIGR00062">
    <property type="entry name" value="L27"/>
    <property type="match status" value="1"/>
</dbReference>
<dbReference type="PANTHER" id="PTHR15893:SF0">
    <property type="entry name" value="LARGE RIBOSOMAL SUBUNIT PROTEIN BL27M"/>
    <property type="match status" value="1"/>
</dbReference>
<dbReference type="PANTHER" id="PTHR15893">
    <property type="entry name" value="RIBOSOMAL PROTEIN L27"/>
    <property type="match status" value="1"/>
</dbReference>
<dbReference type="Pfam" id="PF01016">
    <property type="entry name" value="Ribosomal_L27"/>
    <property type="match status" value="1"/>
</dbReference>
<dbReference type="PRINTS" id="PR00063">
    <property type="entry name" value="RIBOSOMALL27"/>
</dbReference>
<dbReference type="SUPFAM" id="SSF110324">
    <property type="entry name" value="Ribosomal L27 protein-like"/>
    <property type="match status" value="1"/>
</dbReference>
<dbReference type="PROSITE" id="PS00831">
    <property type="entry name" value="RIBOSOMAL_L27"/>
    <property type="match status" value="1"/>
</dbReference>
<feature type="chain" id="PRO_1000128808" description="Large ribosomal subunit protein bL27">
    <location>
        <begin position="1"/>
        <end position="84"/>
    </location>
</feature>
<feature type="region of interest" description="Disordered" evidence="2">
    <location>
        <begin position="1"/>
        <end position="22"/>
    </location>
</feature>
<comment type="similarity">
    <text evidence="1">Belongs to the bacterial ribosomal protein bL27 family.</text>
</comment>
<accession>B8CSY4</accession>
<gene>
    <name evidence="1" type="primary">rpmA</name>
    <name type="ordered locus">swp_4096</name>
</gene>
<organism>
    <name type="scientific">Shewanella piezotolerans (strain WP3 / JCM 13877)</name>
    <dbReference type="NCBI Taxonomy" id="225849"/>
    <lineage>
        <taxon>Bacteria</taxon>
        <taxon>Pseudomonadati</taxon>
        <taxon>Pseudomonadota</taxon>
        <taxon>Gammaproteobacteria</taxon>
        <taxon>Alteromonadales</taxon>
        <taxon>Shewanellaceae</taxon>
        <taxon>Shewanella</taxon>
    </lineage>
</organism>
<name>RL27_SHEPW</name>
<reference key="1">
    <citation type="journal article" date="2008" name="PLoS ONE">
        <title>Environmental adaptation: genomic analysis of the piezotolerant and psychrotolerant deep-sea iron reducing bacterium Shewanella piezotolerans WP3.</title>
        <authorList>
            <person name="Wang F."/>
            <person name="Wang J."/>
            <person name="Jian H."/>
            <person name="Zhang B."/>
            <person name="Li S."/>
            <person name="Wang F."/>
            <person name="Zeng X."/>
            <person name="Gao L."/>
            <person name="Bartlett D.H."/>
            <person name="Yu J."/>
            <person name="Hu S."/>
            <person name="Xiao X."/>
        </authorList>
    </citation>
    <scope>NUCLEOTIDE SEQUENCE [LARGE SCALE GENOMIC DNA]</scope>
    <source>
        <strain>WP3 / JCM 13877</strain>
    </source>
</reference>
<sequence>MAHKKAGGSTRNGRDSESKRLGVKRFGGESVLAGNIIVRQRGTKFHAGVNVGIGRDHTLFALTDGKVKFEVKGPQNRKFISIED</sequence>
<proteinExistence type="inferred from homology"/>